<name>LBD25_ARATH</name>
<comment type="tissue specificity">
    <text evidence="2">Expressed in young shoots, roots, stems, leaves and flowers.</text>
</comment>
<comment type="similarity">
    <text evidence="3">Belongs to the LOB domain-containing protein family.</text>
</comment>
<comment type="sequence caution" evidence="3">
    <conflict type="erroneous gene model prediction">
        <sequence resource="EMBL-CDS" id="BAB02689"/>
    </conflict>
</comment>
<gene>
    <name type="primary">LBD25</name>
    <name type="synonym">ASL3</name>
    <name type="ordered locus">At3g27650</name>
    <name type="ORF">MGF10.6</name>
</gene>
<sequence length="159" mass="17749">MPKRETKKIKPSQEVIKEGPFLVAIHLKGIYMSNYTNSPCAACKFLRRKCTSDCVFAPYFPPEEPTKFANVHRIFGASNVSKILHEVAPHQREDAVNSLAYEAEARLKDPVYGCVGAISVLQRQVLRLQRELEETNADLMRYAGCLGGETTSAYGGRRG</sequence>
<keyword id="KW-1185">Reference proteome</keyword>
<feature type="chain" id="PRO_0000132276" description="LOB domain-containing protein 25">
    <location>
        <begin position="1"/>
        <end position="159"/>
    </location>
</feature>
<feature type="domain" description="LOB" evidence="1">
    <location>
        <begin position="38"/>
        <end position="139"/>
    </location>
</feature>
<feature type="sequence conflict" description="In Ref. 6; AAL38037." evidence="3" ref="6">
    <original>A</original>
    <variation>T</variation>
    <location>
        <position position="24"/>
    </location>
</feature>
<feature type="sequence conflict" description="In Ref. 6; AAM67184." evidence="3" ref="6">
    <original>A</original>
    <variation>P</variation>
    <location>
        <position position="88"/>
    </location>
</feature>
<evidence type="ECO:0000255" key="1">
    <source>
        <dbReference type="PROSITE-ProRule" id="PRU00291"/>
    </source>
</evidence>
<evidence type="ECO:0000269" key="2">
    <source>
    </source>
</evidence>
<evidence type="ECO:0000305" key="3"/>
<dbReference type="EMBL" id="AF447892">
    <property type="protein sequence ID" value="AAL38037.1"/>
    <property type="molecule type" value="mRNA"/>
</dbReference>
<dbReference type="EMBL" id="AB164304">
    <property type="protein sequence ID" value="BAD12423.1"/>
    <property type="molecule type" value="mRNA"/>
</dbReference>
<dbReference type="EMBL" id="AB473836">
    <property type="protein sequence ID" value="BAH10547.1"/>
    <property type="molecule type" value="mRNA"/>
</dbReference>
<dbReference type="EMBL" id="AB018114">
    <property type="protein sequence ID" value="BAB02689.1"/>
    <property type="status" value="ALT_SEQ"/>
    <property type="molecule type" value="Genomic_DNA"/>
</dbReference>
<dbReference type="EMBL" id="CP002686">
    <property type="protein sequence ID" value="AEE77348.1"/>
    <property type="molecule type" value="Genomic_DNA"/>
</dbReference>
<dbReference type="EMBL" id="AY088878">
    <property type="protein sequence ID" value="AAM67184.1"/>
    <property type="molecule type" value="mRNA"/>
</dbReference>
<dbReference type="RefSeq" id="NP_566823.1">
    <property type="nucleotide sequence ID" value="NM_113681.2"/>
</dbReference>
<dbReference type="SMR" id="Q8L8Q3"/>
<dbReference type="BioGRID" id="7717">
    <property type="interactions" value="12"/>
</dbReference>
<dbReference type="IntAct" id="Q8L8Q3">
    <property type="interactions" value="12"/>
</dbReference>
<dbReference type="STRING" id="3702.Q8L8Q3"/>
<dbReference type="PaxDb" id="3702-AT3G27650.1"/>
<dbReference type="ProteomicsDB" id="250724"/>
<dbReference type="DNASU" id="822387"/>
<dbReference type="EnsemblPlants" id="AT3G27650.1">
    <property type="protein sequence ID" value="AT3G27650.1"/>
    <property type="gene ID" value="AT3G27650"/>
</dbReference>
<dbReference type="GeneID" id="822387"/>
<dbReference type="Gramene" id="AT3G27650.1">
    <property type="protein sequence ID" value="AT3G27650.1"/>
    <property type="gene ID" value="AT3G27650"/>
</dbReference>
<dbReference type="KEGG" id="ath:AT3G27650"/>
<dbReference type="Araport" id="AT3G27650"/>
<dbReference type="TAIR" id="AT3G27650">
    <property type="gene designation" value="LBD25"/>
</dbReference>
<dbReference type="eggNOG" id="ENOG502RY39">
    <property type="taxonomic scope" value="Eukaryota"/>
</dbReference>
<dbReference type="HOGENOM" id="CLU_058353_6_1_1"/>
<dbReference type="InParanoid" id="Q8L8Q3"/>
<dbReference type="OMA" id="IAPHQRE"/>
<dbReference type="OrthoDB" id="1926568at2759"/>
<dbReference type="PhylomeDB" id="Q8L8Q3"/>
<dbReference type="PRO" id="PR:Q8L8Q3"/>
<dbReference type="Proteomes" id="UP000006548">
    <property type="component" value="Chromosome 3"/>
</dbReference>
<dbReference type="ExpressionAtlas" id="Q8L8Q3">
    <property type="expression patterns" value="baseline and differential"/>
</dbReference>
<dbReference type="InterPro" id="IPR004883">
    <property type="entry name" value="LOB"/>
</dbReference>
<dbReference type="PANTHER" id="PTHR31301:SF12">
    <property type="entry name" value="LOB DOMAIN-CONTAINING PROTEIN 25"/>
    <property type="match status" value="1"/>
</dbReference>
<dbReference type="PANTHER" id="PTHR31301">
    <property type="entry name" value="LOB DOMAIN-CONTAINING PROTEIN 4-RELATED"/>
    <property type="match status" value="1"/>
</dbReference>
<dbReference type="Pfam" id="PF03195">
    <property type="entry name" value="LOB"/>
    <property type="match status" value="1"/>
</dbReference>
<dbReference type="PROSITE" id="PS50891">
    <property type="entry name" value="LOB"/>
    <property type="match status" value="1"/>
</dbReference>
<accession>Q8L8Q3</accession>
<accession>B7XG57</accession>
<accession>Q75PS1</accession>
<accession>Q8W1D6</accession>
<accession>Q9LVX4</accession>
<protein>
    <recommendedName>
        <fullName>LOB domain-containing protein 25</fullName>
    </recommendedName>
    <alternativeName>
        <fullName>ASYMMETRIC LEAVES 2-like protein 3</fullName>
        <shortName>AS2-like protein 3</shortName>
    </alternativeName>
</protein>
<proteinExistence type="evidence at transcript level"/>
<organism>
    <name type="scientific">Arabidopsis thaliana</name>
    <name type="common">Mouse-ear cress</name>
    <dbReference type="NCBI Taxonomy" id="3702"/>
    <lineage>
        <taxon>Eukaryota</taxon>
        <taxon>Viridiplantae</taxon>
        <taxon>Streptophyta</taxon>
        <taxon>Embryophyta</taxon>
        <taxon>Tracheophyta</taxon>
        <taxon>Spermatophyta</taxon>
        <taxon>Magnoliopsida</taxon>
        <taxon>eudicotyledons</taxon>
        <taxon>Gunneridae</taxon>
        <taxon>Pentapetalae</taxon>
        <taxon>rosids</taxon>
        <taxon>malvids</taxon>
        <taxon>Brassicales</taxon>
        <taxon>Brassicaceae</taxon>
        <taxon>Camelineae</taxon>
        <taxon>Arabidopsis</taxon>
    </lineage>
</organism>
<reference key="1">
    <citation type="journal article" date="2002" name="Plant Physiol.">
        <title>The LATERAL ORGAN BOUNDARIES gene defines a novel, plant-specific gene family.</title>
        <authorList>
            <person name="Shuai B."/>
            <person name="Reynaga-Pena C.G."/>
            <person name="Springer P.S."/>
        </authorList>
    </citation>
    <scope>NUCLEOTIDE SEQUENCE [MRNA]</scope>
    <scope>TISSUE SPECIFICITY</scope>
    <scope>GENE FAMILY</scope>
    <scope>NOMENCLATURE</scope>
    <source>
        <strain>cv. Columbia</strain>
    </source>
</reference>
<reference key="2">
    <citation type="journal article" date="2002" name="Plant Cell Physiol.">
        <title>The ASYMMETRIC LEAVES2 gene of Arabidopsis thaliana, required for formation of a symmetric flat leaf lamina, encodes a member of a novel family of proteins characterized by cysteine repeats and a leucine zipper.</title>
        <authorList>
            <person name="Iwakawa H."/>
            <person name="Ueno Y."/>
            <person name="Semiarti E."/>
            <person name="Onouchi H."/>
            <person name="Kojima S."/>
            <person name="Tsukaya H."/>
            <person name="Hasebe M."/>
            <person name="Soma T."/>
            <person name="Ikezaki M."/>
            <person name="Machida C."/>
            <person name="Machida Y."/>
        </authorList>
    </citation>
    <scope>NUCLEOTIDE SEQUENCE [MRNA]</scope>
    <scope>GENE FAMILY</scope>
    <scope>NOMENCLATURE</scope>
</reference>
<reference key="3">
    <citation type="journal article" date="2009" name="Plant J.">
        <title>Characterization of genes in the ASYMMETRIC LEAVES2/LATERAL ORGAN BOUNDARIES (AS2/LOB) family in Arabidopsis thaliana, and functional and molecular comparisons between AS2 and other family members.</title>
        <authorList>
            <person name="Matsumura Y."/>
            <person name="Iwakawa H."/>
            <person name="Machida Y."/>
            <person name="Machida C."/>
        </authorList>
    </citation>
    <scope>NUCLEOTIDE SEQUENCE [MRNA]</scope>
    <source>
        <strain>cv. Columbia</strain>
    </source>
</reference>
<reference key="4">
    <citation type="journal article" date="2000" name="DNA Res.">
        <title>Structural analysis of Arabidopsis thaliana chromosome 3. I. Sequence features of the regions of 4,504,864 bp covered by sixty P1 and TAC clones.</title>
        <authorList>
            <person name="Sato S."/>
            <person name="Nakamura Y."/>
            <person name="Kaneko T."/>
            <person name="Katoh T."/>
            <person name="Asamizu E."/>
            <person name="Tabata S."/>
        </authorList>
    </citation>
    <scope>NUCLEOTIDE SEQUENCE [LARGE SCALE GENOMIC DNA]</scope>
    <source>
        <strain>cv. Columbia</strain>
    </source>
</reference>
<reference key="5">
    <citation type="journal article" date="2017" name="Plant J.">
        <title>Araport11: a complete reannotation of the Arabidopsis thaliana reference genome.</title>
        <authorList>
            <person name="Cheng C.Y."/>
            <person name="Krishnakumar V."/>
            <person name="Chan A.P."/>
            <person name="Thibaud-Nissen F."/>
            <person name="Schobel S."/>
            <person name="Town C.D."/>
        </authorList>
    </citation>
    <scope>GENOME REANNOTATION</scope>
    <source>
        <strain>cv. Columbia</strain>
    </source>
</reference>
<reference key="6">
    <citation type="submission" date="2002-03" db="EMBL/GenBank/DDBJ databases">
        <title>Full-length cDNA from Arabidopsis thaliana.</title>
        <authorList>
            <person name="Brover V.V."/>
            <person name="Troukhan M.E."/>
            <person name="Alexandrov N.A."/>
            <person name="Lu Y.-P."/>
            <person name="Flavell R.B."/>
            <person name="Feldmann K.A."/>
        </authorList>
    </citation>
    <scope>NUCLEOTIDE SEQUENCE [LARGE SCALE MRNA]</scope>
</reference>